<sequence>MTRYIFVTGGVVSSLGKGIASASLAAILEARGLKITMLKLDPYINVDPGTMSPFQHGEVFVTQDGAETDLDLGHYERFVRTTMTQNNNFTTGRVYMDVLRKERRGDYLGATVQVIPHITDEIKRRIIKGAGDADVALVEIGGTVGDIESQPFLEAIRQLRVEIGAKRAMLMHLTLVPYIATAGETKTKPTQHSVKELRSIGLQPDVLVCRSDHPIDVSSRRKIALFTNVEERAVIALEDVDTIYRIPSVLHAQGLDDIVVERFGLECGQADLSEWDRVVDAKLNPEREVTIAMVGKYMELLDAYKSLIEAMTHAGIQSRTKVNLRYIDSEDIEQQGTSLLEGVDAILVPGGFGLRGVEGKISTVQYARENKIPYLGICLGMQVAVIEYARNVLGWSDANSTEFDKSSGHPVVGLITEWQDATGATEIRTEASDLGGTMRLGAQECQLQTGTLVHDCYAKDVIVERHRHRYEVNNNLLPQLEQAGLKISGRSGDGALVEVVEAPEHPWFVACQFHPEFTSTPRDGHPLFSGFVNAALKYSGKA</sequence>
<proteinExistence type="inferred from homology"/>
<comment type="function">
    <text evidence="1">Catalyzes the ATP-dependent amination of UTP to CTP with either L-glutamine or ammonia as the source of nitrogen. Regulates intracellular CTP levels through interactions with the four ribonucleotide triphosphates.</text>
</comment>
<comment type="catalytic activity">
    <reaction evidence="1">
        <text>UTP + L-glutamine + ATP + H2O = CTP + L-glutamate + ADP + phosphate + 2 H(+)</text>
        <dbReference type="Rhea" id="RHEA:26426"/>
        <dbReference type="ChEBI" id="CHEBI:15377"/>
        <dbReference type="ChEBI" id="CHEBI:15378"/>
        <dbReference type="ChEBI" id="CHEBI:29985"/>
        <dbReference type="ChEBI" id="CHEBI:30616"/>
        <dbReference type="ChEBI" id="CHEBI:37563"/>
        <dbReference type="ChEBI" id="CHEBI:43474"/>
        <dbReference type="ChEBI" id="CHEBI:46398"/>
        <dbReference type="ChEBI" id="CHEBI:58359"/>
        <dbReference type="ChEBI" id="CHEBI:456216"/>
        <dbReference type="EC" id="6.3.4.2"/>
    </reaction>
</comment>
<comment type="catalytic activity">
    <reaction evidence="1">
        <text>L-glutamine + H2O = L-glutamate + NH4(+)</text>
        <dbReference type="Rhea" id="RHEA:15889"/>
        <dbReference type="ChEBI" id="CHEBI:15377"/>
        <dbReference type="ChEBI" id="CHEBI:28938"/>
        <dbReference type="ChEBI" id="CHEBI:29985"/>
        <dbReference type="ChEBI" id="CHEBI:58359"/>
    </reaction>
</comment>
<comment type="catalytic activity">
    <reaction evidence="1">
        <text>UTP + NH4(+) + ATP = CTP + ADP + phosphate + 2 H(+)</text>
        <dbReference type="Rhea" id="RHEA:16597"/>
        <dbReference type="ChEBI" id="CHEBI:15378"/>
        <dbReference type="ChEBI" id="CHEBI:28938"/>
        <dbReference type="ChEBI" id="CHEBI:30616"/>
        <dbReference type="ChEBI" id="CHEBI:37563"/>
        <dbReference type="ChEBI" id="CHEBI:43474"/>
        <dbReference type="ChEBI" id="CHEBI:46398"/>
        <dbReference type="ChEBI" id="CHEBI:456216"/>
    </reaction>
</comment>
<comment type="activity regulation">
    <text evidence="1">Allosterically activated by GTP, when glutamine is the substrate; GTP has no effect on the reaction when ammonia is the substrate. The allosteric effector GTP functions by stabilizing the protein conformation that binds the tetrahedral intermediate(s) formed during glutamine hydrolysis. Inhibited by the product CTP, via allosteric rather than competitive inhibition.</text>
</comment>
<comment type="pathway">
    <text evidence="1">Pyrimidine metabolism; CTP biosynthesis via de novo pathway; CTP from UDP: step 2/2.</text>
</comment>
<comment type="subunit">
    <text evidence="1">Homotetramer.</text>
</comment>
<comment type="miscellaneous">
    <text evidence="1">CTPSs have evolved a hybrid strategy for distinguishing between UTP and CTP. The overlapping regions of the product feedback inhibitory and substrate sites recognize a common feature in both compounds, the triphosphate moiety. To differentiate isosteric substrate and product pyrimidine rings, an additional pocket far from the expected kinase/ligase catalytic site, specifically recognizes the cytosine and ribose portions of the product inhibitor.</text>
</comment>
<comment type="similarity">
    <text evidence="1">Belongs to the CTP synthase family.</text>
</comment>
<reference key="1">
    <citation type="journal article" date="2009" name="Genome Res.">
        <title>Newly introduced genomic prophage islands are critical determinants of in vivo competitiveness in the Liverpool epidemic strain of Pseudomonas aeruginosa.</title>
        <authorList>
            <person name="Winstanley C."/>
            <person name="Langille M.G.I."/>
            <person name="Fothergill J.L."/>
            <person name="Kukavica-Ibrulj I."/>
            <person name="Paradis-Bleau C."/>
            <person name="Sanschagrin F."/>
            <person name="Thomson N.R."/>
            <person name="Winsor G.L."/>
            <person name="Quail M.A."/>
            <person name="Lennard N."/>
            <person name="Bignell A."/>
            <person name="Clarke L."/>
            <person name="Seeger K."/>
            <person name="Saunders D."/>
            <person name="Harris D."/>
            <person name="Parkhill J."/>
            <person name="Hancock R.E.W."/>
            <person name="Brinkman F.S.L."/>
            <person name="Levesque R.C."/>
        </authorList>
    </citation>
    <scope>NUCLEOTIDE SEQUENCE [LARGE SCALE GENOMIC DNA]</scope>
    <source>
        <strain>LESB58</strain>
    </source>
</reference>
<name>PYRG_PSEA8</name>
<keyword id="KW-0067">ATP-binding</keyword>
<keyword id="KW-0315">Glutamine amidotransferase</keyword>
<keyword id="KW-0436">Ligase</keyword>
<keyword id="KW-0460">Magnesium</keyword>
<keyword id="KW-0479">Metal-binding</keyword>
<keyword id="KW-0547">Nucleotide-binding</keyword>
<keyword id="KW-0665">Pyrimidine biosynthesis</keyword>
<accession>B7V7V1</accession>
<gene>
    <name evidence="1" type="primary">pyrG</name>
    <name type="ordered locus">PLES_13981</name>
</gene>
<organism>
    <name type="scientific">Pseudomonas aeruginosa (strain LESB58)</name>
    <dbReference type="NCBI Taxonomy" id="557722"/>
    <lineage>
        <taxon>Bacteria</taxon>
        <taxon>Pseudomonadati</taxon>
        <taxon>Pseudomonadota</taxon>
        <taxon>Gammaproteobacteria</taxon>
        <taxon>Pseudomonadales</taxon>
        <taxon>Pseudomonadaceae</taxon>
        <taxon>Pseudomonas</taxon>
    </lineage>
</organism>
<feature type="chain" id="PRO_1000139531" description="CTP synthase">
    <location>
        <begin position="1"/>
        <end position="542"/>
    </location>
</feature>
<feature type="domain" description="Glutamine amidotransferase type-1" evidence="1">
    <location>
        <begin position="290"/>
        <end position="541"/>
    </location>
</feature>
<feature type="region of interest" description="Amidoligase domain" evidence="1">
    <location>
        <begin position="1"/>
        <end position="265"/>
    </location>
</feature>
<feature type="active site" description="Nucleophile; for glutamine hydrolysis" evidence="1">
    <location>
        <position position="378"/>
    </location>
</feature>
<feature type="active site" evidence="1">
    <location>
        <position position="514"/>
    </location>
</feature>
<feature type="active site" evidence="1">
    <location>
        <position position="516"/>
    </location>
</feature>
<feature type="binding site" evidence="1">
    <location>
        <position position="13"/>
    </location>
    <ligand>
        <name>CTP</name>
        <dbReference type="ChEBI" id="CHEBI:37563"/>
        <note>allosteric inhibitor</note>
    </ligand>
</feature>
<feature type="binding site" evidence="1">
    <location>
        <position position="13"/>
    </location>
    <ligand>
        <name>UTP</name>
        <dbReference type="ChEBI" id="CHEBI:46398"/>
    </ligand>
</feature>
<feature type="binding site" evidence="1">
    <location>
        <begin position="14"/>
        <end position="19"/>
    </location>
    <ligand>
        <name>ATP</name>
        <dbReference type="ChEBI" id="CHEBI:30616"/>
    </ligand>
</feature>
<feature type="binding site" evidence="1">
    <location>
        <position position="71"/>
    </location>
    <ligand>
        <name>ATP</name>
        <dbReference type="ChEBI" id="CHEBI:30616"/>
    </ligand>
</feature>
<feature type="binding site" evidence="1">
    <location>
        <position position="71"/>
    </location>
    <ligand>
        <name>Mg(2+)</name>
        <dbReference type="ChEBI" id="CHEBI:18420"/>
    </ligand>
</feature>
<feature type="binding site" evidence="1">
    <location>
        <position position="139"/>
    </location>
    <ligand>
        <name>Mg(2+)</name>
        <dbReference type="ChEBI" id="CHEBI:18420"/>
    </ligand>
</feature>
<feature type="binding site" evidence="1">
    <location>
        <begin position="146"/>
        <end position="148"/>
    </location>
    <ligand>
        <name>CTP</name>
        <dbReference type="ChEBI" id="CHEBI:37563"/>
        <note>allosteric inhibitor</note>
    </ligand>
</feature>
<feature type="binding site" evidence="1">
    <location>
        <begin position="186"/>
        <end position="191"/>
    </location>
    <ligand>
        <name>CTP</name>
        <dbReference type="ChEBI" id="CHEBI:37563"/>
        <note>allosteric inhibitor</note>
    </ligand>
</feature>
<feature type="binding site" evidence="1">
    <location>
        <begin position="186"/>
        <end position="191"/>
    </location>
    <ligand>
        <name>UTP</name>
        <dbReference type="ChEBI" id="CHEBI:46398"/>
    </ligand>
</feature>
<feature type="binding site" evidence="1">
    <location>
        <position position="222"/>
    </location>
    <ligand>
        <name>CTP</name>
        <dbReference type="ChEBI" id="CHEBI:37563"/>
        <note>allosteric inhibitor</note>
    </ligand>
</feature>
<feature type="binding site" evidence="1">
    <location>
        <position position="222"/>
    </location>
    <ligand>
        <name>UTP</name>
        <dbReference type="ChEBI" id="CHEBI:46398"/>
    </ligand>
</feature>
<feature type="binding site" evidence="1">
    <location>
        <position position="351"/>
    </location>
    <ligand>
        <name>L-glutamine</name>
        <dbReference type="ChEBI" id="CHEBI:58359"/>
    </ligand>
</feature>
<feature type="binding site" evidence="1">
    <location>
        <begin position="379"/>
        <end position="382"/>
    </location>
    <ligand>
        <name>L-glutamine</name>
        <dbReference type="ChEBI" id="CHEBI:58359"/>
    </ligand>
</feature>
<feature type="binding site" evidence="1">
    <location>
        <position position="402"/>
    </location>
    <ligand>
        <name>L-glutamine</name>
        <dbReference type="ChEBI" id="CHEBI:58359"/>
    </ligand>
</feature>
<feature type="binding site" evidence="1">
    <location>
        <position position="469"/>
    </location>
    <ligand>
        <name>L-glutamine</name>
        <dbReference type="ChEBI" id="CHEBI:58359"/>
    </ligand>
</feature>
<dbReference type="EC" id="6.3.4.2" evidence="1"/>
<dbReference type="EMBL" id="FM209186">
    <property type="protein sequence ID" value="CAW26126.1"/>
    <property type="molecule type" value="Genomic_DNA"/>
</dbReference>
<dbReference type="RefSeq" id="WP_003092366.1">
    <property type="nucleotide sequence ID" value="NC_011770.1"/>
</dbReference>
<dbReference type="SMR" id="B7V7V1"/>
<dbReference type="KEGG" id="pag:PLES_13981"/>
<dbReference type="HOGENOM" id="CLU_011675_5_0_6"/>
<dbReference type="UniPathway" id="UPA00159">
    <property type="reaction ID" value="UER00277"/>
</dbReference>
<dbReference type="GO" id="GO:0005829">
    <property type="term" value="C:cytosol"/>
    <property type="evidence" value="ECO:0007669"/>
    <property type="project" value="TreeGrafter"/>
</dbReference>
<dbReference type="GO" id="GO:0005524">
    <property type="term" value="F:ATP binding"/>
    <property type="evidence" value="ECO:0007669"/>
    <property type="project" value="UniProtKB-KW"/>
</dbReference>
<dbReference type="GO" id="GO:0003883">
    <property type="term" value="F:CTP synthase activity"/>
    <property type="evidence" value="ECO:0007669"/>
    <property type="project" value="UniProtKB-UniRule"/>
</dbReference>
<dbReference type="GO" id="GO:0004359">
    <property type="term" value="F:glutaminase activity"/>
    <property type="evidence" value="ECO:0007669"/>
    <property type="project" value="RHEA"/>
</dbReference>
<dbReference type="GO" id="GO:0042802">
    <property type="term" value="F:identical protein binding"/>
    <property type="evidence" value="ECO:0007669"/>
    <property type="project" value="TreeGrafter"/>
</dbReference>
<dbReference type="GO" id="GO:0046872">
    <property type="term" value="F:metal ion binding"/>
    <property type="evidence" value="ECO:0007669"/>
    <property type="project" value="UniProtKB-KW"/>
</dbReference>
<dbReference type="GO" id="GO:0044210">
    <property type="term" value="P:'de novo' CTP biosynthetic process"/>
    <property type="evidence" value="ECO:0007669"/>
    <property type="project" value="UniProtKB-UniRule"/>
</dbReference>
<dbReference type="GO" id="GO:0019856">
    <property type="term" value="P:pyrimidine nucleobase biosynthetic process"/>
    <property type="evidence" value="ECO:0007669"/>
    <property type="project" value="TreeGrafter"/>
</dbReference>
<dbReference type="CDD" id="cd03113">
    <property type="entry name" value="CTPS_N"/>
    <property type="match status" value="1"/>
</dbReference>
<dbReference type="CDD" id="cd01746">
    <property type="entry name" value="GATase1_CTP_Synthase"/>
    <property type="match status" value="1"/>
</dbReference>
<dbReference type="FunFam" id="3.40.50.300:FF:000009">
    <property type="entry name" value="CTP synthase"/>
    <property type="match status" value="1"/>
</dbReference>
<dbReference type="FunFam" id="3.40.50.880:FF:000002">
    <property type="entry name" value="CTP synthase"/>
    <property type="match status" value="1"/>
</dbReference>
<dbReference type="Gene3D" id="3.40.50.880">
    <property type="match status" value="1"/>
</dbReference>
<dbReference type="Gene3D" id="3.40.50.300">
    <property type="entry name" value="P-loop containing nucleotide triphosphate hydrolases"/>
    <property type="match status" value="1"/>
</dbReference>
<dbReference type="HAMAP" id="MF_01227">
    <property type="entry name" value="PyrG"/>
    <property type="match status" value="1"/>
</dbReference>
<dbReference type="InterPro" id="IPR029062">
    <property type="entry name" value="Class_I_gatase-like"/>
</dbReference>
<dbReference type="InterPro" id="IPR004468">
    <property type="entry name" value="CTP_synthase"/>
</dbReference>
<dbReference type="InterPro" id="IPR017456">
    <property type="entry name" value="CTP_synthase_N"/>
</dbReference>
<dbReference type="InterPro" id="IPR017926">
    <property type="entry name" value="GATASE"/>
</dbReference>
<dbReference type="InterPro" id="IPR033828">
    <property type="entry name" value="GATase1_CTP_Synthase"/>
</dbReference>
<dbReference type="InterPro" id="IPR027417">
    <property type="entry name" value="P-loop_NTPase"/>
</dbReference>
<dbReference type="NCBIfam" id="NF003792">
    <property type="entry name" value="PRK05380.1"/>
    <property type="match status" value="1"/>
</dbReference>
<dbReference type="NCBIfam" id="TIGR00337">
    <property type="entry name" value="PyrG"/>
    <property type="match status" value="1"/>
</dbReference>
<dbReference type="PANTHER" id="PTHR11550">
    <property type="entry name" value="CTP SYNTHASE"/>
    <property type="match status" value="1"/>
</dbReference>
<dbReference type="PANTHER" id="PTHR11550:SF0">
    <property type="entry name" value="CTP SYNTHASE-RELATED"/>
    <property type="match status" value="1"/>
</dbReference>
<dbReference type="Pfam" id="PF06418">
    <property type="entry name" value="CTP_synth_N"/>
    <property type="match status" value="1"/>
</dbReference>
<dbReference type="Pfam" id="PF00117">
    <property type="entry name" value="GATase"/>
    <property type="match status" value="1"/>
</dbReference>
<dbReference type="SUPFAM" id="SSF52317">
    <property type="entry name" value="Class I glutamine amidotransferase-like"/>
    <property type="match status" value="1"/>
</dbReference>
<dbReference type="SUPFAM" id="SSF52540">
    <property type="entry name" value="P-loop containing nucleoside triphosphate hydrolases"/>
    <property type="match status" value="1"/>
</dbReference>
<dbReference type="PROSITE" id="PS51273">
    <property type="entry name" value="GATASE_TYPE_1"/>
    <property type="match status" value="1"/>
</dbReference>
<evidence type="ECO:0000255" key="1">
    <source>
        <dbReference type="HAMAP-Rule" id="MF_01227"/>
    </source>
</evidence>
<protein>
    <recommendedName>
        <fullName evidence="1">CTP synthase</fullName>
        <ecNumber evidence="1">6.3.4.2</ecNumber>
    </recommendedName>
    <alternativeName>
        <fullName evidence="1">Cytidine 5'-triphosphate synthase</fullName>
    </alternativeName>
    <alternativeName>
        <fullName evidence="1">Cytidine triphosphate synthetase</fullName>
        <shortName evidence="1">CTP synthetase</shortName>
        <shortName evidence="1">CTPS</shortName>
    </alternativeName>
    <alternativeName>
        <fullName evidence="1">UTP--ammonia ligase</fullName>
    </alternativeName>
</protein>